<evidence type="ECO:0000250" key="1"/>
<evidence type="ECO:0000250" key="2">
    <source>
        <dbReference type="UniProtKB" id="P0C6L3"/>
    </source>
</evidence>
<evidence type="ECO:0000255" key="3"/>
<evidence type="ECO:0000255" key="4">
    <source>
        <dbReference type="PROSITE-ProRule" id="PRU01183"/>
    </source>
</evidence>
<evidence type="ECO:0000256" key="5">
    <source>
        <dbReference type="SAM" id="MobiDB-lite"/>
    </source>
</evidence>
<evidence type="ECO:0000269" key="6">
    <source>
    </source>
</evidence>
<evidence type="ECO:0000269" key="7">
    <source>
    </source>
</evidence>
<evidence type="ECO:0000305" key="8"/>
<sequence>MSQTVARLTSKEREEILEQWVEERKNRRKLEKDLRRANKKIKKLEDENPWLGNVVGLLRRKKDEDGAPPAKRPRQETMEVDSGPGRKPKARGFTDQERRDHRRRKALENKKKQLAGGGKHLSQEEEEELRRLARDDDERERRTAGPRPGGVNPMDGPPRGAPGGGFVPSLQGVPESPFSRTGEGIDIRGTQQFP</sequence>
<organism>
    <name type="scientific">Hepatitis delta virus genotype III (isolate Peru-1)</name>
    <name type="common">HDV</name>
    <dbReference type="NCBI Taxonomy" id="261996"/>
    <lineage>
        <taxon>Viruses</taxon>
        <taxon>Ribozyviria</taxon>
        <taxon>Kolmioviridae</taxon>
        <taxon>Deltavirus</taxon>
        <taxon>Hepatitis delta virus</taxon>
    </lineage>
</organism>
<name>SHDAG_HDVP1</name>
<comment type="function">
    <text evidence="1">Promotes both transcription and replication of genomic RNA. Following virus entry into host cell, provides nuclear import of HDV RNPs thanks to its nuclear localization signal. May interact with host RNA polymerase II thereby changing its template requirement from DNA to RNA. RNA pol II complex would then acts as an RNA-directed RNA polymerase, and transcribe and replicate HDV genome (By similarity).</text>
</comment>
<comment type="subunit">
    <text evidence="1">Homodimer. Homooctamer. Interacts with host RNA polymerase II complex, and with host NPM1.</text>
</comment>
<comment type="subcellular location">
    <subcellularLocation>
        <location>Virion</location>
    </subcellularLocation>
    <subcellularLocation>
        <location evidence="1">Host nucleus</location>
    </subcellularLocation>
</comment>
<comment type="PTM">
    <text evidence="1">Phosphorylated at serines and threonines by host MAPK1/3, PKR, and CK2.</text>
</comment>
<comment type="PTM">
    <text evidence="1">Acetylation modulates nuclear localization. Neo-synthesized genomic RNA migrates from the nucleus to the cytoplasm, where they interact with S-HDAg, which once acetylated redirect both partners to the nucleus (By similarity).</text>
</comment>
<comment type="PTM">
    <text evidence="1">Methylation plays a role in viral genome replication.</text>
</comment>
<comment type="RNA editing">
    <location>
        <position position="196" evidence="6 7"/>
    </location>
    <text evidence="1">Partially edited. RNA editing at this position occurs on the antigenomic strand and consists of a conversion of A to G catalyzed by the cellular enzyme ADAR1. The unedited RNA version gives rise to the small delta antigen, which ends with a nonsense codon at position 196. In the edited version, this amber codon is modified to a tryptophan codon and gives rise to the large delta antigen protein (AC P0C6M3). S-HDAg suppresses editing of non-replicating antigenomic RNA, thereby regulating the extent of editing (By similarity).</text>
</comment>
<comment type="miscellaneous">
    <text>This strain belongs to the genotype III found only among cases in South America and which causes a more severe form of infection than genotypes I and II.</text>
</comment>
<comment type="similarity">
    <text evidence="8">Belongs to the hepatitis delta antigen family.</text>
</comment>
<dbReference type="EMBL" id="L22063">
    <property type="protein sequence ID" value="AAB02596.1"/>
    <property type="molecule type" value="Genomic_RNA"/>
</dbReference>
<dbReference type="SMR" id="Q81842"/>
<dbReference type="Proteomes" id="UP000008110">
    <property type="component" value="Segment"/>
</dbReference>
<dbReference type="GO" id="GO:0043657">
    <property type="term" value="C:host cell"/>
    <property type="evidence" value="ECO:0007669"/>
    <property type="project" value="GOC"/>
</dbReference>
<dbReference type="GO" id="GO:0042025">
    <property type="term" value="C:host cell nucleus"/>
    <property type="evidence" value="ECO:0007669"/>
    <property type="project" value="UniProtKB-SubCell"/>
</dbReference>
<dbReference type="GO" id="GO:0044423">
    <property type="term" value="C:virion component"/>
    <property type="evidence" value="ECO:0007669"/>
    <property type="project" value="UniProtKB-KW"/>
</dbReference>
<dbReference type="GO" id="GO:0003723">
    <property type="term" value="F:RNA binding"/>
    <property type="evidence" value="ECO:0007669"/>
    <property type="project" value="UniProtKB-KW"/>
</dbReference>
<dbReference type="GO" id="GO:0046718">
    <property type="term" value="P:symbiont entry into host cell"/>
    <property type="evidence" value="ECO:0007669"/>
    <property type="project" value="UniProtKB-KW"/>
</dbReference>
<dbReference type="GO" id="GO:0075732">
    <property type="term" value="P:viral penetration into host nucleus"/>
    <property type="evidence" value="ECO:0007669"/>
    <property type="project" value="UniProtKB-KW"/>
</dbReference>
<dbReference type="Gene3D" id="4.10.220.40">
    <property type="entry name" value="Delta antigen, N-terminal"/>
    <property type="match status" value="1"/>
</dbReference>
<dbReference type="InterPro" id="IPR027403">
    <property type="entry name" value="Delta_antigen_N"/>
</dbReference>
<dbReference type="InterPro" id="IPR037517">
    <property type="entry name" value="HDAG_dom"/>
</dbReference>
<dbReference type="InterPro" id="IPR002506">
    <property type="entry name" value="HDV_ag"/>
</dbReference>
<dbReference type="Pfam" id="PF01517">
    <property type="entry name" value="HDV_ag"/>
    <property type="match status" value="1"/>
</dbReference>
<dbReference type="SUPFAM" id="SSF58108">
    <property type="entry name" value="Oligomerization domain of hepatitis delta antigen"/>
    <property type="match status" value="1"/>
</dbReference>
<dbReference type="PROSITE" id="PS51838">
    <property type="entry name" value="HDAG"/>
    <property type="match status" value="1"/>
</dbReference>
<feature type="chain" id="PRO_0000038143" description="Small delta antigen">
    <location>
        <begin position="1"/>
        <end position="194"/>
    </location>
</feature>
<feature type="domain" description="HDAg" evidence="4">
    <location>
        <begin position="20"/>
        <end position="194"/>
    </location>
</feature>
<feature type="region of interest" description="Dimerization" evidence="3">
    <location>
        <begin position="12"/>
        <end position="59"/>
    </location>
</feature>
<feature type="region of interest" description="Disordered" evidence="5">
    <location>
        <begin position="57"/>
        <end position="194"/>
    </location>
</feature>
<feature type="region of interest" description="RNA-binding" evidence="4">
    <location>
        <begin position="96"/>
        <end position="106"/>
    </location>
</feature>
<feature type="region of interest" description="RNAPII-binding" evidence="4">
    <location>
        <begin position="129"/>
        <end position="194"/>
    </location>
</feature>
<feature type="region of interest" description="RNA-binding" evidence="4">
    <location>
        <begin position="135"/>
        <end position="145"/>
    </location>
</feature>
<feature type="short sequence motif" description="Nuclear localization signal" evidence="2">
    <location>
        <begin position="65"/>
        <end position="74"/>
    </location>
</feature>
<feature type="compositionally biased region" description="Basic and acidic residues" evidence="5">
    <location>
        <begin position="128"/>
        <end position="143"/>
    </location>
</feature>
<feature type="modified residue" description="Phosphoserine; by host CK2" evidence="2">
    <location>
        <position position="2"/>
    </location>
</feature>
<feature type="modified residue" description="Omega-N-methylated arginine; by host PRMT1" evidence="2">
    <location>
        <position position="13"/>
    </location>
</feature>
<feature type="modified residue" description="N6-acetyllysine; by host" evidence="2">
    <location>
        <position position="71"/>
    </location>
</feature>
<feature type="modified residue" description="Phosphoserine; by host" evidence="2">
    <location>
        <position position="122"/>
    </location>
</feature>
<feature type="modified residue" description="Phosphoserine; by host MAPK1 and MAPK3" evidence="2">
    <location>
        <position position="176"/>
    </location>
</feature>
<feature type="modified residue" description="Phosphothreonine; by host" evidence="2">
    <location>
        <position position="181"/>
    </location>
</feature>
<organismHost>
    <name type="scientific">Homo sapiens</name>
    <name type="common">Human</name>
    <dbReference type="NCBI Taxonomy" id="9606"/>
</organismHost>
<proteinExistence type="inferred from homology"/>
<accession>Q81842</accession>
<accession>Q81843</accession>
<reference key="1">
    <citation type="journal article" date="1993" name="Proc. Natl. Acad. Sci. U.S.A.">
        <title>A genotype of hepatitis D virus that occurs in northern South America.</title>
        <authorList>
            <person name="Casey J.L."/>
            <person name="Brown T.L."/>
            <person name="Colan E.J."/>
            <person name="Wignall F.S."/>
            <person name="Gerin J.L."/>
        </authorList>
    </citation>
    <scope>NUCLEOTIDE SEQUENCE [GENOMIC RNA]</scope>
    <scope>RNA EDITING</scope>
</reference>
<reference key="2">
    <citation type="journal article" date="2003" name="J. Virol.">
        <title>Differential inhibition of RNA editing in hepatitis delta virus genotype III by the short and long forms of hepatitis delta antigen.</title>
        <authorList>
            <person name="Cheng Q."/>
            <person name="Jayan G.C."/>
            <person name="Casey J.L."/>
        </authorList>
    </citation>
    <scope>RNA EDITING</scope>
</reference>
<reference key="3">
    <citation type="journal article" date="2005" name="Acta Virol.">
        <title>Hepatitis D.</title>
        <authorList>
            <person name="Husa P."/>
            <person name="Linhartova A."/>
            <person name="Nemecek V."/>
            <person name="Husova L."/>
        </authorList>
    </citation>
    <scope>REVIEW</scope>
</reference>
<reference key="4">
    <citation type="journal article" date="2006" name="Curr. Top. Microbiol. Immunol.">
        <title>Post-translational modification of delta antigen of hepatitis D virus.</title>
        <authorList>
            <person name="Huang W.H."/>
            <person name="Chen C.W."/>
            <person name="Wu H.L."/>
            <person name="Chen P.J."/>
        </authorList>
    </citation>
    <scope>REVIEW</scope>
</reference>
<protein>
    <recommendedName>
        <fullName>Small delta antigen</fullName>
        <shortName>S-HDAg</shortName>
    </recommendedName>
    <alternativeName>
        <fullName>p24</fullName>
    </alternativeName>
</protein>
<keyword id="KW-0007">Acetylation</keyword>
<keyword id="KW-1048">Host nucleus</keyword>
<keyword id="KW-0945">Host-virus interaction</keyword>
<keyword id="KW-0488">Methylation</keyword>
<keyword id="KW-0597">Phosphoprotein</keyword>
<keyword id="KW-0691">RNA editing</keyword>
<keyword id="KW-0694">RNA-binding</keyword>
<keyword id="KW-1163">Viral penetration into host nucleus</keyword>
<keyword id="KW-0946">Virion</keyword>
<keyword id="KW-1160">Virus entry into host cell</keyword>